<evidence type="ECO:0000255" key="1">
    <source>
        <dbReference type="HAMAP-Rule" id="MF_01006"/>
    </source>
</evidence>
<dbReference type="EC" id="3.6.1.27" evidence="1"/>
<dbReference type="EMBL" id="CP000304">
    <property type="protein sequence ID" value="ABP79871.1"/>
    <property type="molecule type" value="Genomic_DNA"/>
</dbReference>
<dbReference type="RefSeq" id="WP_011913338.1">
    <property type="nucleotide sequence ID" value="NC_009434.1"/>
</dbReference>
<dbReference type="SMR" id="A4VLM0"/>
<dbReference type="KEGG" id="psa:PST_2210"/>
<dbReference type="eggNOG" id="COG1968">
    <property type="taxonomic scope" value="Bacteria"/>
</dbReference>
<dbReference type="HOGENOM" id="CLU_060296_2_0_6"/>
<dbReference type="Proteomes" id="UP000000233">
    <property type="component" value="Chromosome"/>
</dbReference>
<dbReference type="GO" id="GO:0005886">
    <property type="term" value="C:plasma membrane"/>
    <property type="evidence" value="ECO:0007669"/>
    <property type="project" value="UniProtKB-SubCell"/>
</dbReference>
<dbReference type="GO" id="GO:0050380">
    <property type="term" value="F:undecaprenyl-diphosphatase activity"/>
    <property type="evidence" value="ECO:0007669"/>
    <property type="project" value="UniProtKB-UniRule"/>
</dbReference>
<dbReference type="GO" id="GO:0071555">
    <property type="term" value="P:cell wall organization"/>
    <property type="evidence" value="ECO:0007669"/>
    <property type="project" value="UniProtKB-KW"/>
</dbReference>
<dbReference type="GO" id="GO:0009252">
    <property type="term" value="P:peptidoglycan biosynthetic process"/>
    <property type="evidence" value="ECO:0007669"/>
    <property type="project" value="UniProtKB-KW"/>
</dbReference>
<dbReference type="GO" id="GO:0008360">
    <property type="term" value="P:regulation of cell shape"/>
    <property type="evidence" value="ECO:0007669"/>
    <property type="project" value="UniProtKB-KW"/>
</dbReference>
<dbReference type="GO" id="GO:0046677">
    <property type="term" value="P:response to antibiotic"/>
    <property type="evidence" value="ECO:0007669"/>
    <property type="project" value="UniProtKB-UniRule"/>
</dbReference>
<dbReference type="HAMAP" id="MF_01006">
    <property type="entry name" value="Undec_diphosphatase"/>
    <property type="match status" value="1"/>
</dbReference>
<dbReference type="InterPro" id="IPR003824">
    <property type="entry name" value="UppP"/>
</dbReference>
<dbReference type="NCBIfam" id="NF001389">
    <property type="entry name" value="PRK00281.1-2"/>
    <property type="match status" value="1"/>
</dbReference>
<dbReference type="NCBIfam" id="NF001390">
    <property type="entry name" value="PRK00281.1-4"/>
    <property type="match status" value="1"/>
</dbReference>
<dbReference type="NCBIfam" id="TIGR00753">
    <property type="entry name" value="undec_PP_bacA"/>
    <property type="match status" value="1"/>
</dbReference>
<dbReference type="PANTHER" id="PTHR30622">
    <property type="entry name" value="UNDECAPRENYL-DIPHOSPHATASE"/>
    <property type="match status" value="1"/>
</dbReference>
<dbReference type="PANTHER" id="PTHR30622:SF3">
    <property type="entry name" value="UNDECAPRENYL-DIPHOSPHATASE"/>
    <property type="match status" value="1"/>
</dbReference>
<dbReference type="Pfam" id="PF02673">
    <property type="entry name" value="BacA"/>
    <property type="match status" value="1"/>
</dbReference>
<feature type="chain" id="PRO_0000303033" description="Undecaprenyl-diphosphatase 1">
    <location>
        <begin position="1"/>
        <end position="276"/>
    </location>
</feature>
<feature type="transmembrane region" description="Helical" evidence="1">
    <location>
        <begin position="44"/>
        <end position="63"/>
    </location>
</feature>
<feature type="transmembrane region" description="Helical" evidence="1">
    <location>
        <begin position="85"/>
        <end position="105"/>
    </location>
</feature>
<feature type="transmembrane region" description="Helical" evidence="1">
    <location>
        <begin position="109"/>
        <end position="129"/>
    </location>
</feature>
<feature type="transmembrane region" description="Helical" evidence="1">
    <location>
        <begin position="183"/>
        <end position="203"/>
    </location>
</feature>
<feature type="transmembrane region" description="Helical" evidence="1">
    <location>
        <begin position="214"/>
        <end position="234"/>
    </location>
</feature>
<feature type="transmembrane region" description="Helical" evidence="1">
    <location>
        <begin position="249"/>
        <end position="269"/>
    </location>
</feature>
<keyword id="KW-0046">Antibiotic resistance</keyword>
<keyword id="KW-0997">Cell inner membrane</keyword>
<keyword id="KW-1003">Cell membrane</keyword>
<keyword id="KW-0133">Cell shape</keyword>
<keyword id="KW-0961">Cell wall biogenesis/degradation</keyword>
<keyword id="KW-0378">Hydrolase</keyword>
<keyword id="KW-0472">Membrane</keyword>
<keyword id="KW-0573">Peptidoglycan synthesis</keyword>
<keyword id="KW-1185">Reference proteome</keyword>
<keyword id="KW-0812">Transmembrane</keyword>
<keyword id="KW-1133">Transmembrane helix</keyword>
<name>UPPP1_STUS1</name>
<protein>
    <recommendedName>
        <fullName evidence="1">Undecaprenyl-diphosphatase 1</fullName>
        <ecNumber evidence="1">3.6.1.27</ecNumber>
    </recommendedName>
    <alternativeName>
        <fullName evidence="1">Bacitracin resistance protein 1</fullName>
    </alternativeName>
    <alternativeName>
        <fullName evidence="1">Undecaprenyl pyrophosphate phosphatase 1</fullName>
    </alternativeName>
</protein>
<organism>
    <name type="scientific">Stutzerimonas stutzeri (strain A1501)</name>
    <name type="common">Pseudomonas stutzeri</name>
    <dbReference type="NCBI Taxonomy" id="379731"/>
    <lineage>
        <taxon>Bacteria</taxon>
        <taxon>Pseudomonadati</taxon>
        <taxon>Pseudomonadota</taxon>
        <taxon>Gammaproteobacteria</taxon>
        <taxon>Pseudomonadales</taxon>
        <taxon>Pseudomonadaceae</taxon>
        <taxon>Stutzerimonas</taxon>
    </lineage>
</organism>
<gene>
    <name evidence="1" type="primary">uppP1</name>
    <name type="ordered locus">PST_2210</name>
</gene>
<sequence>MDLWVAIQALILGVVEGITEFLPVSSTGHQIIVADLIGFGGERALAFNIIIQLGAILAVIWEYRRKIIDVVVGLPEERQAQKFTVNLLIAFMPAVVLGVAFADLIHEYLFNPITVAAALVIGGIVMLWAERRDHAIRAETVDDMTWTLALKVGFAQCLALVPGTSRSGSTIIGGLLFGLSRKAATEFSFFLAMPTMVGAAVYSGYKYRDLFQPGDFAVFAIGFVTSFIFAMLAVRALLKFIGNHSYAAFAWYRIGFGLLILATWQLGMIDWSTAIG</sequence>
<reference key="1">
    <citation type="journal article" date="2008" name="Proc. Natl. Acad. Sci. U.S.A.">
        <title>Nitrogen fixation island and rhizosphere competence traits in the genome of root-associated Pseudomonas stutzeri A1501.</title>
        <authorList>
            <person name="Yan Y."/>
            <person name="Yang J."/>
            <person name="Dou Y."/>
            <person name="Chen M."/>
            <person name="Ping S."/>
            <person name="Peng J."/>
            <person name="Lu W."/>
            <person name="Zhang W."/>
            <person name="Yao Z."/>
            <person name="Li H."/>
            <person name="Liu W."/>
            <person name="He S."/>
            <person name="Geng L."/>
            <person name="Zhang X."/>
            <person name="Yang F."/>
            <person name="Yu H."/>
            <person name="Zhan Y."/>
            <person name="Li D."/>
            <person name="Lin Z."/>
            <person name="Wang Y."/>
            <person name="Elmerich C."/>
            <person name="Lin M."/>
            <person name="Jin Q."/>
        </authorList>
    </citation>
    <scope>NUCLEOTIDE SEQUENCE [LARGE SCALE GENOMIC DNA]</scope>
    <source>
        <strain>A1501</strain>
    </source>
</reference>
<proteinExistence type="inferred from homology"/>
<comment type="function">
    <text evidence="1">Catalyzes the dephosphorylation of undecaprenyl diphosphate (UPP). Confers resistance to bacitracin.</text>
</comment>
<comment type="catalytic activity">
    <reaction evidence="1">
        <text>di-trans,octa-cis-undecaprenyl diphosphate + H2O = di-trans,octa-cis-undecaprenyl phosphate + phosphate + H(+)</text>
        <dbReference type="Rhea" id="RHEA:28094"/>
        <dbReference type="ChEBI" id="CHEBI:15377"/>
        <dbReference type="ChEBI" id="CHEBI:15378"/>
        <dbReference type="ChEBI" id="CHEBI:43474"/>
        <dbReference type="ChEBI" id="CHEBI:58405"/>
        <dbReference type="ChEBI" id="CHEBI:60392"/>
        <dbReference type="EC" id="3.6.1.27"/>
    </reaction>
</comment>
<comment type="subcellular location">
    <subcellularLocation>
        <location evidence="1">Cell inner membrane</location>
        <topology evidence="1">Multi-pass membrane protein</topology>
    </subcellularLocation>
</comment>
<comment type="miscellaneous">
    <text>Bacitracin is thought to be involved in the inhibition of peptidoglycan synthesis by sequestering undecaprenyl diphosphate, thereby reducing the pool of lipid carrier available.</text>
</comment>
<comment type="similarity">
    <text evidence="1">Belongs to the UppP family.</text>
</comment>
<accession>A4VLM0</accession>